<evidence type="ECO:0000255" key="1">
    <source>
        <dbReference type="HAMAP-Rule" id="MF_00963"/>
    </source>
</evidence>
<evidence type="ECO:0000256" key="2">
    <source>
        <dbReference type="SAM" id="MobiDB-lite"/>
    </source>
</evidence>
<gene>
    <name evidence="1" type="primary">rpoD</name>
    <name type="ordered locus">BU055</name>
</gene>
<feature type="chain" id="PRO_0000093877" description="RNA polymerase sigma factor RpoD">
    <location>
        <begin position="1"/>
        <end position="612"/>
    </location>
</feature>
<feature type="DNA-binding region" description="H-T-H motif" evidence="1">
    <location>
        <begin position="572"/>
        <end position="591"/>
    </location>
</feature>
<feature type="region of interest" description="Disordered" evidence="2">
    <location>
        <begin position="191"/>
        <end position="210"/>
    </location>
</feature>
<feature type="region of interest" description="Sigma-70 factor domain-2" evidence="1">
    <location>
        <begin position="378"/>
        <end position="448"/>
    </location>
</feature>
<feature type="region of interest" description="Sigma-70 factor domain-3" evidence="1">
    <location>
        <begin position="457"/>
        <end position="533"/>
    </location>
</feature>
<feature type="region of interest" description="Sigma-70 factor domain-4" evidence="1">
    <location>
        <begin position="546"/>
        <end position="599"/>
    </location>
</feature>
<feature type="short sequence motif" description="Interaction with polymerase core subunit RpoC">
    <location>
        <begin position="402"/>
        <end position="405"/>
    </location>
</feature>
<feature type="compositionally biased region" description="Acidic residues" evidence="2">
    <location>
        <begin position="191"/>
        <end position="206"/>
    </location>
</feature>
<reference key="1">
    <citation type="journal article" date="2000" name="Nature">
        <title>Genome sequence of the endocellular bacterial symbiont of aphids Buchnera sp. APS.</title>
        <authorList>
            <person name="Shigenobu S."/>
            <person name="Watanabe H."/>
            <person name="Hattori M."/>
            <person name="Sakaki Y."/>
            <person name="Ishikawa H."/>
        </authorList>
    </citation>
    <scope>NUCLEOTIDE SEQUENCE [LARGE SCALE GENOMIC DNA]</scope>
    <source>
        <strain>APS</strain>
    </source>
</reference>
<dbReference type="EMBL" id="BA000003">
    <property type="protein sequence ID" value="BAB12778.1"/>
    <property type="molecule type" value="Genomic_DNA"/>
</dbReference>
<dbReference type="RefSeq" id="NP_239892.1">
    <property type="nucleotide sequence ID" value="NC_002528.1"/>
</dbReference>
<dbReference type="RefSeq" id="WP_009874012.1">
    <property type="nucleotide sequence ID" value="NC_002528.1"/>
</dbReference>
<dbReference type="SMR" id="P57163"/>
<dbReference type="STRING" id="563178.BUAP5A_054"/>
<dbReference type="EnsemblBacteria" id="BAB12778">
    <property type="protein sequence ID" value="BAB12778"/>
    <property type="gene ID" value="BAB12778"/>
</dbReference>
<dbReference type="KEGG" id="buc:BU055"/>
<dbReference type="PATRIC" id="fig|107806.10.peg.64"/>
<dbReference type="eggNOG" id="COG0568">
    <property type="taxonomic scope" value="Bacteria"/>
</dbReference>
<dbReference type="HOGENOM" id="CLU_014793_7_2_6"/>
<dbReference type="Proteomes" id="UP000001806">
    <property type="component" value="Chromosome"/>
</dbReference>
<dbReference type="GO" id="GO:0005737">
    <property type="term" value="C:cytoplasm"/>
    <property type="evidence" value="ECO:0007669"/>
    <property type="project" value="UniProtKB-SubCell"/>
</dbReference>
<dbReference type="GO" id="GO:0003677">
    <property type="term" value="F:DNA binding"/>
    <property type="evidence" value="ECO:0007669"/>
    <property type="project" value="UniProtKB-UniRule"/>
</dbReference>
<dbReference type="GO" id="GO:0016987">
    <property type="term" value="F:sigma factor activity"/>
    <property type="evidence" value="ECO:0007669"/>
    <property type="project" value="UniProtKB-UniRule"/>
</dbReference>
<dbReference type="GO" id="GO:0006352">
    <property type="term" value="P:DNA-templated transcription initiation"/>
    <property type="evidence" value="ECO:0007669"/>
    <property type="project" value="UniProtKB-UniRule"/>
</dbReference>
<dbReference type="CDD" id="cd06171">
    <property type="entry name" value="Sigma70_r4"/>
    <property type="match status" value="1"/>
</dbReference>
<dbReference type="FunFam" id="1.10.220.120:FF:000001">
    <property type="entry name" value="RNA polymerase sigma factor RpoD"/>
    <property type="match status" value="1"/>
</dbReference>
<dbReference type="FunFam" id="1.10.601.10:FF:000002">
    <property type="entry name" value="RNA polymerase sigma factor RpoD"/>
    <property type="match status" value="1"/>
</dbReference>
<dbReference type="FunFam" id="1.10.10.10:FF:000002">
    <property type="entry name" value="RNA polymerase sigma factor SigA"/>
    <property type="match status" value="1"/>
</dbReference>
<dbReference type="FunFam" id="1.10.10.10:FF:000004">
    <property type="entry name" value="RNA polymerase sigma factor SigA"/>
    <property type="match status" value="1"/>
</dbReference>
<dbReference type="Gene3D" id="1.10.601.10">
    <property type="entry name" value="RNA Polymerase Primary Sigma Factor"/>
    <property type="match status" value="1"/>
</dbReference>
<dbReference type="Gene3D" id="1.10.220.120">
    <property type="entry name" value="Sigma-70 factor, region 1.1"/>
    <property type="match status" value="1"/>
</dbReference>
<dbReference type="Gene3D" id="1.10.10.10">
    <property type="entry name" value="Winged helix-like DNA-binding domain superfamily/Winged helix DNA-binding domain"/>
    <property type="match status" value="2"/>
</dbReference>
<dbReference type="HAMAP" id="MF_00963">
    <property type="entry name" value="Sigma70_RpoD_SigA"/>
    <property type="match status" value="1"/>
</dbReference>
<dbReference type="InterPro" id="IPR014284">
    <property type="entry name" value="RNA_pol_sigma-70_dom"/>
</dbReference>
<dbReference type="InterPro" id="IPR000943">
    <property type="entry name" value="RNA_pol_sigma70"/>
</dbReference>
<dbReference type="InterPro" id="IPR009042">
    <property type="entry name" value="RNA_pol_sigma70_r1_2"/>
</dbReference>
<dbReference type="InterPro" id="IPR007627">
    <property type="entry name" value="RNA_pol_sigma70_r2"/>
</dbReference>
<dbReference type="InterPro" id="IPR007624">
    <property type="entry name" value="RNA_pol_sigma70_r3"/>
</dbReference>
<dbReference type="InterPro" id="IPR007630">
    <property type="entry name" value="RNA_pol_sigma70_r4"/>
</dbReference>
<dbReference type="InterPro" id="IPR007631">
    <property type="entry name" value="RNA_pol_sigma_70_non-ess"/>
</dbReference>
<dbReference type="InterPro" id="IPR007127">
    <property type="entry name" value="RNA_pol_sigma_70_r1_1"/>
</dbReference>
<dbReference type="InterPro" id="IPR042189">
    <property type="entry name" value="RNA_pol_sigma_70_r1_1_sf"/>
</dbReference>
<dbReference type="InterPro" id="IPR013325">
    <property type="entry name" value="RNA_pol_sigma_r2"/>
</dbReference>
<dbReference type="InterPro" id="IPR013324">
    <property type="entry name" value="RNA_pol_sigma_r3/r4-like"/>
</dbReference>
<dbReference type="InterPro" id="IPR012760">
    <property type="entry name" value="RNA_pol_sigma_RpoD_C"/>
</dbReference>
<dbReference type="InterPro" id="IPR050239">
    <property type="entry name" value="Sigma-70_RNA_pol_init_factors"/>
</dbReference>
<dbReference type="InterPro" id="IPR028630">
    <property type="entry name" value="Sigma70_RpoD"/>
</dbReference>
<dbReference type="InterPro" id="IPR036388">
    <property type="entry name" value="WH-like_DNA-bd_sf"/>
</dbReference>
<dbReference type="NCBIfam" id="NF004208">
    <property type="entry name" value="PRK05658.1"/>
    <property type="match status" value="1"/>
</dbReference>
<dbReference type="NCBIfam" id="TIGR02393">
    <property type="entry name" value="RpoD_Cterm"/>
    <property type="match status" value="1"/>
</dbReference>
<dbReference type="NCBIfam" id="TIGR02937">
    <property type="entry name" value="sigma70-ECF"/>
    <property type="match status" value="1"/>
</dbReference>
<dbReference type="PANTHER" id="PTHR30603">
    <property type="entry name" value="RNA POLYMERASE SIGMA FACTOR RPO"/>
    <property type="match status" value="1"/>
</dbReference>
<dbReference type="PANTHER" id="PTHR30603:SF60">
    <property type="entry name" value="RNA POLYMERASE SIGMA FACTOR RPOD"/>
    <property type="match status" value="1"/>
</dbReference>
<dbReference type="Pfam" id="PF04546">
    <property type="entry name" value="Sigma70_ner"/>
    <property type="match status" value="1"/>
</dbReference>
<dbReference type="Pfam" id="PF03979">
    <property type="entry name" value="Sigma70_r1_1"/>
    <property type="match status" value="1"/>
</dbReference>
<dbReference type="Pfam" id="PF00140">
    <property type="entry name" value="Sigma70_r1_2"/>
    <property type="match status" value="1"/>
</dbReference>
<dbReference type="Pfam" id="PF04542">
    <property type="entry name" value="Sigma70_r2"/>
    <property type="match status" value="1"/>
</dbReference>
<dbReference type="Pfam" id="PF04539">
    <property type="entry name" value="Sigma70_r3"/>
    <property type="match status" value="1"/>
</dbReference>
<dbReference type="Pfam" id="PF04545">
    <property type="entry name" value="Sigma70_r4"/>
    <property type="match status" value="1"/>
</dbReference>
<dbReference type="PRINTS" id="PR00046">
    <property type="entry name" value="SIGMA70FCT"/>
</dbReference>
<dbReference type="SUPFAM" id="SSF88946">
    <property type="entry name" value="Sigma2 domain of RNA polymerase sigma factors"/>
    <property type="match status" value="1"/>
</dbReference>
<dbReference type="SUPFAM" id="SSF88659">
    <property type="entry name" value="Sigma3 and sigma4 domains of RNA polymerase sigma factors"/>
    <property type="match status" value="2"/>
</dbReference>
<dbReference type="PROSITE" id="PS00715">
    <property type="entry name" value="SIGMA70_1"/>
    <property type="match status" value="1"/>
</dbReference>
<dbReference type="PROSITE" id="PS00716">
    <property type="entry name" value="SIGMA70_2"/>
    <property type="match status" value="1"/>
</dbReference>
<protein>
    <recommendedName>
        <fullName evidence="1">RNA polymerase sigma factor RpoD</fullName>
    </recommendedName>
    <alternativeName>
        <fullName evidence="1">Sigma-70</fullName>
    </alternativeName>
</protein>
<proteinExistence type="inferred from homology"/>
<name>RPOD_BUCAI</name>
<accession>P57163</accession>
<sequence>MDQNPQSQLKLLVTHGKEQGYLTYSEVNDHLPEDIIDSEQIDDIIQMINDMGIPVVEEAPDADDLILNEINTDTDEDAVEAATQVLSSVESELGRTTDPVRMYMREMGTVELLTREGEIDIAKRIEEGINQVQCSVSEYPEAITYLLEQYDRVKTGQIRLSDIITGFVDPNAEEIFPPTAIHIGSELLDEQQNNEEDEENNQEDHEDDHSIDPELANEKFSELRIQYNNTNNTIKNKNRTHKDSLLEIYNLSEVFKQFRLVPKQFDHLVNNMRHMMERVRKQERIIIKLCVEICKMPKKNFIKIFPIKKINYLWFIREQNTNQPWSENLKKVKEDVFISVKKLIKIEEETGLTIEQVKDINKRMSIGEAKARRAKKEMVEANLRLVISIAKKYTNRGLQFLDLIQEGNIGLMKAVDKFEYRRGYKFSTYATWWIRQAITRSIADQARTIRIPVHMIETINKLNRISRQMLQEIGREPTPEELSEKMLIPEDKIRKVLKIAKEPISMETPIGDDDDSHLGDFIEDTTLELPLDSATSESLRSATHDVLSGLTAREAKVLRMRFGIDMNTDHTLEEVGKQFDVTRERIRQIEAKALRKLRHPSRSEVLRSFLDD</sequence>
<organism>
    <name type="scientific">Buchnera aphidicola subsp. Acyrthosiphon pisum (strain APS)</name>
    <name type="common">Acyrthosiphon pisum symbiotic bacterium</name>
    <dbReference type="NCBI Taxonomy" id="107806"/>
    <lineage>
        <taxon>Bacteria</taxon>
        <taxon>Pseudomonadati</taxon>
        <taxon>Pseudomonadota</taxon>
        <taxon>Gammaproteobacteria</taxon>
        <taxon>Enterobacterales</taxon>
        <taxon>Erwiniaceae</taxon>
        <taxon>Buchnera</taxon>
    </lineage>
</organism>
<keyword id="KW-0963">Cytoplasm</keyword>
<keyword id="KW-0238">DNA-binding</keyword>
<keyword id="KW-1185">Reference proteome</keyword>
<keyword id="KW-0731">Sigma factor</keyword>
<keyword id="KW-0804">Transcription</keyword>
<keyword id="KW-0805">Transcription regulation</keyword>
<comment type="function">
    <text evidence="1">Sigma factors are initiation factors that promote the attachment of RNA polymerase to specific initiation sites and are then released. This sigma factor is the primary sigma factor during exponential growth.</text>
</comment>
<comment type="subunit">
    <text evidence="1">Interacts transiently with the RNA polymerase catalytic core.</text>
</comment>
<comment type="subcellular location">
    <subcellularLocation>
        <location evidence="1">Cytoplasm</location>
    </subcellularLocation>
</comment>
<comment type="similarity">
    <text evidence="1">Belongs to the sigma-70 factor family. RpoD/SigA subfamily.</text>
</comment>